<gene>
    <name evidence="1" type="primary">lysS</name>
    <name type="ordered locus">Krad_0576</name>
</gene>
<keyword id="KW-0030">Aminoacyl-tRNA synthetase</keyword>
<keyword id="KW-0067">ATP-binding</keyword>
<keyword id="KW-0963">Cytoplasm</keyword>
<keyword id="KW-0436">Ligase</keyword>
<keyword id="KW-0460">Magnesium</keyword>
<keyword id="KW-0479">Metal-binding</keyword>
<keyword id="KW-0547">Nucleotide-binding</keyword>
<keyword id="KW-0648">Protein biosynthesis</keyword>
<keyword id="KW-1185">Reference proteome</keyword>
<dbReference type="EC" id="6.1.1.6" evidence="1"/>
<dbReference type="EMBL" id="CP000750">
    <property type="protein sequence ID" value="ABS02065.1"/>
    <property type="molecule type" value="Genomic_DNA"/>
</dbReference>
<dbReference type="SMR" id="A6W5H6"/>
<dbReference type="STRING" id="266940.Krad_0576"/>
<dbReference type="KEGG" id="kra:Krad_0576"/>
<dbReference type="eggNOG" id="COG1190">
    <property type="taxonomic scope" value="Bacteria"/>
</dbReference>
<dbReference type="HOGENOM" id="CLU_008255_6_0_11"/>
<dbReference type="OrthoDB" id="9801152at2"/>
<dbReference type="Proteomes" id="UP000001116">
    <property type="component" value="Chromosome"/>
</dbReference>
<dbReference type="GO" id="GO:0005829">
    <property type="term" value="C:cytosol"/>
    <property type="evidence" value="ECO:0007669"/>
    <property type="project" value="TreeGrafter"/>
</dbReference>
<dbReference type="GO" id="GO:0005524">
    <property type="term" value="F:ATP binding"/>
    <property type="evidence" value="ECO:0007669"/>
    <property type="project" value="UniProtKB-UniRule"/>
</dbReference>
<dbReference type="GO" id="GO:0004824">
    <property type="term" value="F:lysine-tRNA ligase activity"/>
    <property type="evidence" value="ECO:0007669"/>
    <property type="project" value="UniProtKB-UniRule"/>
</dbReference>
<dbReference type="GO" id="GO:0000287">
    <property type="term" value="F:magnesium ion binding"/>
    <property type="evidence" value="ECO:0007669"/>
    <property type="project" value="UniProtKB-UniRule"/>
</dbReference>
<dbReference type="GO" id="GO:0000049">
    <property type="term" value="F:tRNA binding"/>
    <property type="evidence" value="ECO:0007669"/>
    <property type="project" value="TreeGrafter"/>
</dbReference>
<dbReference type="GO" id="GO:0006430">
    <property type="term" value="P:lysyl-tRNA aminoacylation"/>
    <property type="evidence" value="ECO:0007669"/>
    <property type="project" value="UniProtKB-UniRule"/>
</dbReference>
<dbReference type="CDD" id="cd04322">
    <property type="entry name" value="LysRS_N"/>
    <property type="match status" value="1"/>
</dbReference>
<dbReference type="FunFam" id="2.40.50.140:FF:000024">
    <property type="entry name" value="Lysine--tRNA ligase"/>
    <property type="match status" value="1"/>
</dbReference>
<dbReference type="Gene3D" id="3.30.930.10">
    <property type="entry name" value="Bira Bifunctional Protein, Domain 2"/>
    <property type="match status" value="1"/>
</dbReference>
<dbReference type="Gene3D" id="2.40.50.140">
    <property type="entry name" value="Nucleic acid-binding proteins"/>
    <property type="match status" value="1"/>
</dbReference>
<dbReference type="HAMAP" id="MF_00252">
    <property type="entry name" value="Lys_tRNA_synth_class2"/>
    <property type="match status" value="1"/>
</dbReference>
<dbReference type="InterPro" id="IPR004364">
    <property type="entry name" value="Aa-tRNA-synt_II"/>
</dbReference>
<dbReference type="InterPro" id="IPR006195">
    <property type="entry name" value="aa-tRNA-synth_II"/>
</dbReference>
<dbReference type="InterPro" id="IPR045864">
    <property type="entry name" value="aa-tRNA-synth_II/BPL/LPL"/>
</dbReference>
<dbReference type="InterPro" id="IPR002313">
    <property type="entry name" value="Lys-tRNA-ligase_II"/>
</dbReference>
<dbReference type="InterPro" id="IPR044136">
    <property type="entry name" value="Lys-tRNA-ligase_II_N"/>
</dbReference>
<dbReference type="InterPro" id="IPR018149">
    <property type="entry name" value="Lys-tRNA-synth_II_C"/>
</dbReference>
<dbReference type="InterPro" id="IPR012340">
    <property type="entry name" value="NA-bd_OB-fold"/>
</dbReference>
<dbReference type="InterPro" id="IPR004365">
    <property type="entry name" value="NA-bd_OB_tRNA"/>
</dbReference>
<dbReference type="NCBIfam" id="TIGR00499">
    <property type="entry name" value="lysS_bact"/>
    <property type="match status" value="1"/>
</dbReference>
<dbReference type="NCBIfam" id="NF001756">
    <property type="entry name" value="PRK00484.1"/>
    <property type="match status" value="1"/>
</dbReference>
<dbReference type="PANTHER" id="PTHR42918:SF15">
    <property type="entry name" value="LYSINE--TRNA LIGASE, CHLOROPLASTIC_MITOCHONDRIAL"/>
    <property type="match status" value="1"/>
</dbReference>
<dbReference type="PANTHER" id="PTHR42918">
    <property type="entry name" value="LYSYL-TRNA SYNTHETASE"/>
    <property type="match status" value="1"/>
</dbReference>
<dbReference type="Pfam" id="PF00152">
    <property type="entry name" value="tRNA-synt_2"/>
    <property type="match status" value="1"/>
</dbReference>
<dbReference type="Pfam" id="PF01336">
    <property type="entry name" value="tRNA_anti-codon"/>
    <property type="match status" value="1"/>
</dbReference>
<dbReference type="PRINTS" id="PR00982">
    <property type="entry name" value="TRNASYNTHLYS"/>
</dbReference>
<dbReference type="SUPFAM" id="SSF55681">
    <property type="entry name" value="Class II aaRS and biotin synthetases"/>
    <property type="match status" value="1"/>
</dbReference>
<dbReference type="SUPFAM" id="SSF50249">
    <property type="entry name" value="Nucleic acid-binding proteins"/>
    <property type="match status" value="1"/>
</dbReference>
<dbReference type="PROSITE" id="PS50862">
    <property type="entry name" value="AA_TRNA_LIGASE_II"/>
    <property type="match status" value="1"/>
</dbReference>
<organism>
    <name type="scientific">Kineococcus radiotolerans (strain ATCC BAA-149 / DSM 14245 / SRS30216)</name>
    <dbReference type="NCBI Taxonomy" id="266940"/>
    <lineage>
        <taxon>Bacteria</taxon>
        <taxon>Bacillati</taxon>
        <taxon>Actinomycetota</taxon>
        <taxon>Actinomycetes</taxon>
        <taxon>Kineosporiales</taxon>
        <taxon>Kineosporiaceae</taxon>
        <taxon>Kineococcus</taxon>
    </lineage>
</organism>
<evidence type="ECO:0000255" key="1">
    <source>
        <dbReference type="HAMAP-Rule" id="MF_00252"/>
    </source>
</evidence>
<accession>A6W5H6</accession>
<sequence length="500" mass="55926">MVDGPDEEFEDVPEQVRVRREKRDRILAAGGEAYPVSVPRTDSLADLRERYAHLEAGEETTDQVGVTGRVVFLRGTGKLAFATLQEGDGTRLQVMVSRDGVGEDALAAWKSDVDLGDIVFVHGNVISSRRGELSVLADSWRMASKSLRPLPVLHKELSEETRVRQRYVDLIVREAARTNVRARSNVVRALRRTLEDRGFLEVETPMLQTLHGGASARPFVTRSNAFDTELYLRIAPELFLKRCVVGGIERVFEINRNFRNEGADSTHSPEFAMLETYQAWGDYDSIGELTRALVQNAATEAFGTQLVTLADGSEYDLGGEWTSISMYPSLSASLGEEITPETPREHLIGIAERLGISVDTVRWTHGKLVEELWEHRIADSLHSPTFVRDFPVETSPLVRGHRELPGVVEKWDLYVRGFELATGYSELVDPVVQRERFVEQARLADLGDDEAMRIDEDFLRAQEHGMPPTGGMGMGIDRLLMALTGLGIRETITFPLVKPR</sequence>
<proteinExistence type="inferred from homology"/>
<feature type="chain" id="PRO_1000078503" description="Lysine--tRNA ligase">
    <location>
        <begin position="1"/>
        <end position="500"/>
    </location>
</feature>
<feature type="binding site" evidence="1">
    <location>
        <position position="412"/>
    </location>
    <ligand>
        <name>Mg(2+)</name>
        <dbReference type="ChEBI" id="CHEBI:18420"/>
        <label>1</label>
    </ligand>
</feature>
<feature type="binding site" evidence="1">
    <location>
        <position position="419"/>
    </location>
    <ligand>
        <name>Mg(2+)</name>
        <dbReference type="ChEBI" id="CHEBI:18420"/>
        <label>1</label>
    </ligand>
</feature>
<feature type="binding site" evidence="1">
    <location>
        <position position="419"/>
    </location>
    <ligand>
        <name>Mg(2+)</name>
        <dbReference type="ChEBI" id="CHEBI:18420"/>
        <label>2</label>
    </ligand>
</feature>
<reference key="1">
    <citation type="journal article" date="2008" name="PLoS ONE">
        <title>Survival in nuclear waste, extreme resistance, and potential applications gleaned from the genome sequence of Kineococcus radiotolerans SRS30216.</title>
        <authorList>
            <person name="Bagwell C.E."/>
            <person name="Bhat S."/>
            <person name="Hawkins G.M."/>
            <person name="Smith B.W."/>
            <person name="Biswas T."/>
            <person name="Hoover T.R."/>
            <person name="Saunders E."/>
            <person name="Han C.S."/>
            <person name="Tsodikov O.V."/>
            <person name="Shimkets L.J."/>
        </authorList>
    </citation>
    <scope>NUCLEOTIDE SEQUENCE [LARGE SCALE GENOMIC DNA]</scope>
    <source>
        <strain>ATCC BAA-149 / DSM 14245 / SRS30216</strain>
    </source>
</reference>
<name>SYK_KINRD</name>
<comment type="catalytic activity">
    <reaction evidence="1">
        <text>tRNA(Lys) + L-lysine + ATP = L-lysyl-tRNA(Lys) + AMP + diphosphate</text>
        <dbReference type="Rhea" id="RHEA:20792"/>
        <dbReference type="Rhea" id="RHEA-COMP:9696"/>
        <dbReference type="Rhea" id="RHEA-COMP:9697"/>
        <dbReference type="ChEBI" id="CHEBI:30616"/>
        <dbReference type="ChEBI" id="CHEBI:32551"/>
        <dbReference type="ChEBI" id="CHEBI:33019"/>
        <dbReference type="ChEBI" id="CHEBI:78442"/>
        <dbReference type="ChEBI" id="CHEBI:78529"/>
        <dbReference type="ChEBI" id="CHEBI:456215"/>
        <dbReference type="EC" id="6.1.1.6"/>
    </reaction>
</comment>
<comment type="cofactor">
    <cofactor evidence="1">
        <name>Mg(2+)</name>
        <dbReference type="ChEBI" id="CHEBI:18420"/>
    </cofactor>
    <text evidence="1">Binds 3 Mg(2+) ions per subunit.</text>
</comment>
<comment type="subunit">
    <text evidence="1">Homodimer.</text>
</comment>
<comment type="subcellular location">
    <subcellularLocation>
        <location evidence="1">Cytoplasm</location>
    </subcellularLocation>
</comment>
<comment type="similarity">
    <text evidence="1">Belongs to the class-II aminoacyl-tRNA synthetase family.</text>
</comment>
<protein>
    <recommendedName>
        <fullName evidence="1">Lysine--tRNA ligase</fullName>
        <ecNumber evidence="1">6.1.1.6</ecNumber>
    </recommendedName>
    <alternativeName>
        <fullName evidence="1">Lysyl-tRNA synthetase</fullName>
        <shortName evidence="1">LysRS</shortName>
    </alternativeName>
</protein>